<comment type="function">
    <text evidence="1">Stabilizes the interaction between PsaC and the PSI core, assists the docking of the ferredoxin to PSI and interacts with ferredoxin-NADP oxidoreductase.</text>
</comment>
<comment type="subcellular location">
    <subcellularLocation>
        <location evidence="1">Cellular thylakoid membrane</location>
        <topology evidence="1">Peripheral membrane protein</topology>
    </subcellularLocation>
</comment>
<comment type="similarity">
    <text evidence="1">Belongs to the PsaE family.</text>
</comment>
<keyword id="KW-0472">Membrane</keyword>
<keyword id="KW-0602">Photosynthesis</keyword>
<keyword id="KW-0603">Photosystem I</keyword>
<keyword id="KW-0793">Thylakoid</keyword>
<name>PSAE_PROM9</name>
<gene>
    <name evidence="1" type="primary">psaE</name>
    <name type="ordered locus">PMT9312_0335</name>
</gene>
<accession>Q31CJ9</accession>
<evidence type="ECO:0000255" key="1">
    <source>
        <dbReference type="HAMAP-Rule" id="MF_00613"/>
    </source>
</evidence>
<reference key="1">
    <citation type="journal article" date="2006" name="Science">
        <title>Genomic islands and the ecology and evolution of Prochlorococcus.</title>
        <authorList>
            <person name="Coleman M.L."/>
            <person name="Sullivan M.B."/>
            <person name="Martiny A.C."/>
            <person name="Steglich C."/>
            <person name="Barry K."/>
            <person name="Delong E.F."/>
            <person name="Chisholm S.W."/>
        </authorList>
    </citation>
    <scope>NUCLEOTIDE SEQUENCE [LARGE SCALE GENOMIC DNA]</scope>
    <source>
        <strain>MIT 9312</strain>
    </source>
</reference>
<dbReference type="EMBL" id="CP000111">
    <property type="protein sequence ID" value="ABB49396.1"/>
    <property type="molecule type" value="Genomic_DNA"/>
</dbReference>
<dbReference type="RefSeq" id="WP_011375896.1">
    <property type="nucleotide sequence ID" value="NC_007577.1"/>
</dbReference>
<dbReference type="SMR" id="Q31CJ9"/>
<dbReference type="STRING" id="74546.PMT9312_0335"/>
<dbReference type="KEGG" id="pmi:PMT9312_0335"/>
<dbReference type="eggNOG" id="ENOG503313D">
    <property type="taxonomic scope" value="Bacteria"/>
</dbReference>
<dbReference type="HOGENOM" id="CLU_136462_2_1_3"/>
<dbReference type="OrthoDB" id="427926at2"/>
<dbReference type="Proteomes" id="UP000002715">
    <property type="component" value="Chromosome"/>
</dbReference>
<dbReference type="GO" id="GO:0009538">
    <property type="term" value="C:photosystem I reaction center"/>
    <property type="evidence" value="ECO:0007669"/>
    <property type="project" value="InterPro"/>
</dbReference>
<dbReference type="GO" id="GO:0031676">
    <property type="term" value="C:plasma membrane-derived thylakoid membrane"/>
    <property type="evidence" value="ECO:0007669"/>
    <property type="project" value="UniProtKB-SubCell"/>
</dbReference>
<dbReference type="GO" id="GO:0015979">
    <property type="term" value="P:photosynthesis"/>
    <property type="evidence" value="ECO:0007669"/>
    <property type="project" value="UniProtKB-UniRule"/>
</dbReference>
<dbReference type="Gene3D" id="2.30.30.50">
    <property type="match status" value="1"/>
</dbReference>
<dbReference type="HAMAP" id="MF_00613">
    <property type="entry name" value="PSI_PsaE"/>
    <property type="match status" value="1"/>
</dbReference>
<dbReference type="InterPro" id="IPR008990">
    <property type="entry name" value="Elect_transpt_acc-like_dom_sf"/>
</dbReference>
<dbReference type="InterPro" id="IPR003375">
    <property type="entry name" value="PSI_PsaE"/>
</dbReference>
<dbReference type="NCBIfam" id="NF002745">
    <property type="entry name" value="PRK02749.1"/>
    <property type="match status" value="1"/>
</dbReference>
<dbReference type="PANTHER" id="PTHR34549">
    <property type="entry name" value="PHOTOSYSTEM I REACTION CENTER SUBUNIT IV A, CHLOROPLASTIC-RELATED"/>
    <property type="match status" value="1"/>
</dbReference>
<dbReference type="PANTHER" id="PTHR34549:SF2">
    <property type="entry name" value="PHOTOSYSTEM I SUBUNIT IV"/>
    <property type="match status" value="1"/>
</dbReference>
<dbReference type="Pfam" id="PF02427">
    <property type="entry name" value="PSI_PsaE"/>
    <property type="match status" value="1"/>
</dbReference>
<dbReference type="SUPFAM" id="SSF50090">
    <property type="entry name" value="Electron transport accessory proteins"/>
    <property type="match status" value="1"/>
</dbReference>
<sequence>MAISRGDLVRVKRPESYWYNEIGKVASVDTSGIKYNCVVRFDKVNYAGISGTEGGANTNNFAESELEKA</sequence>
<proteinExistence type="inferred from homology"/>
<feature type="chain" id="PRO_1000061307" description="Photosystem I reaction center subunit IV">
    <location>
        <begin position="1"/>
        <end position="69"/>
    </location>
</feature>
<protein>
    <recommendedName>
        <fullName evidence="1">Photosystem I reaction center subunit IV</fullName>
    </recommendedName>
</protein>
<organism>
    <name type="scientific">Prochlorococcus marinus (strain MIT 9312)</name>
    <dbReference type="NCBI Taxonomy" id="74546"/>
    <lineage>
        <taxon>Bacteria</taxon>
        <taxon>Bacillati</taxon>
        <taxon>Cyanobacteriota</taxon>
        <taxon>Cyanophyceae</taxon>
        <taxon>Synechococcales</taxon>
        <taxon>Prochlorococcaceae</taxon>
        <taxon>Prochlorococcus</taxon>
    </lineage>
</organism>